<proteinExistence type="inferred from homology"/>
<sequence length="360" mass="40188">MKASLLNKLDTLQDRFEELTALLGDAEVISDQARFRAYSREYSEVEPVIGAYKEWRKVQDDLEGAQALLKDADPDMREMAVEEVREAKEQLVGLESQLQRMLLPKDPNDGRNVFLEIRAGTGGDEAAIFSGDLFRMYSRYAERRGWRLEILSENEGEHGGYKEIIARVEGDSVYGKLKFESGAHRVQRVPETESQGRIHTSACTVAVLPEPDEQVAIEINPADLRVDTYRASGAGGQHVNKTDSAIRITHLPTGIVVECQEERSQHKNRARAMSWLSAKLNDMQTSAAQNAIASERKLLVGSGDRSERIRTYNYPQGRVTDHRINLTLYSLDDILAGGVDAVIEPLLAEYQADQLAALGD</sequence>
<dbReference type="EMBL" id="CP000949">
    <property type="protein sequence ID" value="ACA74936.1"/>
    <property type="molecule type" value="Genomic_DNA"/>
</dbReference>
<dbReference type="SMR" id="B1JEP6"/>
<dbReference type="STRING" id="390235.PputW619_4456"/>
<dbReference type="KEGG" id="ppw:PputW619_4456"/>
<dbReference type="eggNOG" id="COG0216">
    <property type="taxonomic scope" value="Bacteria"/>
</dbReference>
<dbReference type="HOGENOM" id="CLU_036856_0_1_6"/>
<dbReference type="OrthoDB" id="9806673at2"/>
<dbReference type="GO" id="GO:0005737">
    <property type="term" value="C:cytoplasm"/>
    <property type="evidence" value="ECO:0007669"/>
    <property type="project" value="UniProtKB-SubCell"/>
</dbReference>
<dbReference type="GO" id="GO:0016149">
    <property type="term" value="F:translation release factor activity, codon specific"/>
    <property type="evidence" value="ECO:0007669"/>
    <property type="project" value="UniProtKB-UniRule"/>
</dbReference>
<dbReference type="FunFam" id="3.30.160.20:FF:000004">
    <property type="entry name" value="Peptide chain release factor 1"/>
    <property type="match status" value="1"/>
</dbReference>
<dbReference type="FunFam" id="3.30.70.1660:FF:000002">
    <property type="entry name" value="Peptide chain release factor 1"/>
    <property type="match status" value="1"/>
</dbReference>
<dbReference type="FunFam" id="3.30.70.1660:FF:000004">
    <property type="entry name" value="Peptide chain release factor 1"/>
    <property type="match status" value="1"/>
</dbReference>
<dbReference type="Gene3D" id="3.30.160.20">
    <property type="match status" value="1"/>
</dbReference>
<dbReference type="Gene3D" id="3.30.70.1660">
    <property type="match status" value="1"/>
</dbReference>
<dbReference type="Gene3D" id="6.10.140.1950">
    <property type="match status" value="1"/>
</dbReference>
<dbReference type="HAMAP" id="MF_00093">
    <property type="entry name" value="Rel_fac_1"/>
    <property type="match status" value="1"/>
</dbReference>
<dbReference type="InterPro" id="IPR005139">
    <property type="entry name" value="PCRF"/>
</dbReference>
<dbReference type="InterPro" id="IPR000352">
    <property type="entry name" value="Pep_chain_release_fac_I"/>
</dbReference>
<dbReference type="InterPro" id="IPR045853">
    <property type="entry name" value="Pep_chain_release_fac_I_sf"/>
</dbReference>
<dbReference type="InterPro" id="IPR050057">
    <property type="entry name" value="Prokaryotic/Mito_RF"/>
</dbReference>
<dbReference type="InterPro" id="IPR004373">
    <property type="entry name" value="RF-1"/>
</dbReference>
<dbReference type="NCBIfam" id="TIGR00019">
    <property type="entry name" value="prfA"/>
    <property type="match status" value="1"/>
</dbReference>
<dbReference type="NCBIfam" id="NF001859">
    <property type="entry name" value="PRK00591.1"/>
    <property type="match status" value="1"/>
</dbReference>
<dbReference type="PANTHER" id="PTHR43804">
    <property type="entry name" value="LD18447P"/>
    <property type="match status" value="1"/>
</dbReference>
<dbReference type="PANTHER" id="PTHR43804:SF7">
    <property type="entry name" value="LD18447P"/>
    <property type="match status" value="1"/>
</dbReference>
<dbReference type="Pfam" id="PF03462">
    <property type="entry name" value="PCRF"/>
    <property type="match status" value="1"/>
</dbReference>
<dbReference type="Pfam" id="PF00472">
    <property type="entry name" value="RF-1"/>
    <property type="match status" value="1"/>
</dbReference>
<dbReference type="SMART" id="SM00937">
    <property type="entry name" value="PCRF"/>
    <property type="match status" value="1"/>
</dbReference>
<dbReference type="SUPFAM" id="SSF75620">
    <property type="entry name" value="Release factor"/>
    <property type="match status" value="1"/>
</dbReference>
<dbReference type="PROSITE" id="PS00745">
    <property type="entry name" value="RF_PROK_I"/>
    <property type="match status" value="1"/>
</dbReference>
<protein>
    <recommendedName>
        <fullName evidence="1">Peptide chain release factor 1</fullName>
        <shortName evidence="1">RF-1</shortName>
    </recommendedName>
</protein>
<comment type="function">
    <text evidence="1">Peptide chain release factor 1 directs the termination of translation in response to the peptide chain termination codons UAG and UAA.</text>
</comment>
<comment type="subcellular location">
    <subcellularLocation>
        <location evidence="1">Cytoplasm</location>
    </subcellularLocation>
</comment>
<comment type="PTM">
    <text evidence="1">Methylated by PrmC. Methylation increases the termination efficiency of RF1.</text>
</comment>
<comment type="similarity">
    <text evidence="1">Belongs to the prokaryotic/mitochondrial release factor family.</text>
</comment>
<keyword id="KW-0963">Cytoplasm</keyword>
<keyword id="KW-0488">Methylation</keyword>
<keyword id="KW-0648">Protein biosynthesis</keyword>
<organism>
    <name type="scientific">Pseudomonas putida (strain W619)</name>
    <dbReference type="NCBI Taxonomy" id="390235"/>
    <lineage>
        <taxon>Bacteria</taxon>
        <taxon>Pseudomonadati</taxon>
        <taxon>Pseudomonadota</taxon>
        <taxon>Gammaproteobacteria</taxon>
        <taxon>Pseudomonadales</taxon>
        <taxon>Pseudomonadaceae</taxon>
        <taxon>Pseudomonas</taxon>
    </lineage>
</organism>
<feature type="chain" id="PRO_1000093492" description="Peptide chain release factor 1">
    <location>
        <begin position="1"/>
        <end position="360"/>
    </location>
</feature>
<feature type="modified residue" description="N5-methylglutamine" evidence="1">
    <location>
        <position position="237"/>
    </location>
</feature>
<accession>B1JEP6</accession>
<gene>
    <name evidence="1" type="primary">prfA</name>
    <name type="ordered locus">PputW619_4456</name>
</gene>
<name>RF1_PSEPW</name>
<reference key="1">
    <citation type="submission" date="2008-02" db="EMBL/GenBank/DDBJ databases">
        <title>Complete sequence of Pseudomonas putida W619.</title>
        <authorList>
            <person name="Copeland A."/>
            <person name="Lucas S."/>
            <person name="Lapidus A."/>
            <person name="Barry K."/>
            <person name="Detter J.C."/>
            <person name="Glavina del Rio T."/>
            <person name="Dalin E."/>
            <person name="Tice H."/>
            <person name="Pitluck S."/>
            <person name="Chain P."/>
            <person name="Malfatti S."/>
            <person name="Shin M."/>
            <person name="Vergez L."/>
            <person name="Schmutz J."/>
            <person name="Larimer F."/>
            <person name="Land M."/>
            <person name="Hauser L."/>
            <person name="Kyrpides N."/>
            <person name="Kim E."/>
            <person name="Taghavi S."/>
            <person name="Vangronsveld D."/>
            <person name="van der Lelie D."/>
            <person name="Richardson P."/>
        </authorList>
    </citation>
    <scope>NUCLEOTIDE SEQUENCE [LARGE SCALE GENOMIC DNA]</scope>
    <source>
        <strain>W619</strain>
    </source>
</reference>
<evidence type="ECO:0000255" key="1">
    <source>
        <dbReference type="HAMAP-Rule" id="MF_00093"/>
    </source>
</evidence>